<dbReference type="EC" id="2.6.1.16" evidence="1"/>
<dbReference type="EMBL" id="CP000026">
    <property type="protein sequence ID" value="AAV79492.1"/>
    <property type="molecule type" value="Genomic_DNA"/>
</dbReference>
<dbReference type="RefSeq" id="WP_000334067.1">
    <property type="nucleotide sequence ID" value="NC_006511.1"/>
</dbReference>
<dbReference type="SMR" id="Q5PKV9"/>
<dbReference type="KEGG" id="spt:SPA3700"/>
<dbReference type="HOGENOM" id="CLU_012520_5_2_6"/>
<dbReference type="Proteomes" id="UP000008185">
    <property type="component" value="Chromosome"/>
</dbReference>
<dbReference type="GO" id="GO:0005829">
    <property type="term" value="C:cytosol"/>
    <property type="evidence" value="ECO:0007669"/>
    <property type="project" value="TreeGrafter"/>
</dbReference>
<dbReference type="GO" id="GO:0097367">
    <property type="term" value="F:carbohydrate derivative binding"/>
    <property type="evidence" value="ECO:0007669"/>
    <property type="project" value="InterPro"/>
</dbReference>
<dbReference type="GO" id="GO:0004360">
    <property type="term" value="F:glutamine-fructose-6-phosphate transaminase (isomerizing) activity"/>
    <property type="evidence" value="ECO:0007669"/>
    <property type="project" value="UniProtKB-UniRule"/>
</dbReference>
<dbReference type="GO" id="GO:0005975">
    <property type="term" value="P:carbohydrate metabolic process"/>
    <property type="evidence" value="ECO:0007669"/>
    <property type="project" value="UniProtKB-UniRule"/>
</dbReference>
<dbReference type="GO" id="GO:0006002">
    <property type="term" value="P:fructose 6-phosphate metabolic process"/>
    <property type="evidence" value="ECO:0007669"/>
    <property type="project" value="TreeGrafter"/>
</dbReference>
<dbReference type="GO" id="GO:0006487">
    <property type="term" value="P:protein N-linked glycosylation"/>
    <property type="evidence" value="ECO:0007669"/>
    <property type="project" value="TreeGrafter"/>
</dbReference>
<dbReference type="GO" id="GO:0006047">
    <property type="term" value="P:UDP-N-acetylglucosamine metabolic process"/>
    <property type="evidence" value="ECO:0007669"/>
    <property type="project" value="TreeGrafter"/>
</dbReference>
<dbReference type="CDD" id="cd00714">
    <property type="entry name" value="GFAT"/>
    <property type="match status" value="1"/>
</dbReference>
<dbReference type="CDD" id="cd05008">
    <property type="entry name" value="SIS_GlmS_GlmD_1"/>
    <property type="match status" value="1"/>
</dbReference>
<dbReference type="CDD" id="cd05009">
    <property type="entry name" value="SIS_GlmS_GlmD_2"/>
    <property type="match status" value="1"/>
</dbReference>
<dbReference type="FunFam" id="3.40.50.10490:FF:000001">
    <property type="entry name" value="Glutamine--fructose-6-phosphate aminotransferase [isomerizing]"/>
    <property type="match status" value="1"/>
</dbReference>
<dbReference type="FunFam" id="3.40.50.10490:FF:000002">
    <property type="entry name" value="Glutamine--fructose-6-phosphate aminotransferase [isomerizing]"/>
    <property type="match status" value="1"/>
</dbReference>
<dbReference type="FunFam" id="3.60.20.10:FF:000006">
    <property type="entry name" value="Glutamine--fructose-6-phosphate aminotransferase [isomerizing]"/>
    <property type="match status" value="1"/>
</dbReference>
<dbReference type="Gene3D" id="3.40.50.10490">
    <property type="entry name" value="Glucose-6-phosphate isomerase like protein, domain 1"/>
    <property type="match status" value="2"/>
</dbReference>
<dbReference type="Gene3D" id="3.60.20.10">
    <property type="entry name" value="Glutamine Phosphoribosylpyrophosphate, subunit 1, domain 1"/>
    <property type="match status" value="1"/>
</dbReference>
<dbReference type="HAMAP" id="MF_00164">
    <property type="entry name" value="GlmS"/>
    <property type="match status" value="1"/>
</dbReference>
<dbReference type="InterPro" id="IPR017932">
    <property type="entry name" value="GATase_2_dom"/>
</dbReference>
<dbReference type="InterPro" id="IPR005855">
    <property type="entry name" value="GFAT"/>
</dbReference>
<dbReference type="InterPro" id="IPR047084">
    <property type="entry name" value="GFAT_N"/>
</dbReference>
<dbReference type="InterPro" id="IPR035466">
    <property type="entry name" value="GlmS/AgaS_SIS"/>
</dbReference>
<dbReference type="InterPro" id="IPR035490">
    <property type="entry name" value="GlmS/FrlB_SIS"/>
</dbReference>
<dbReference type="InterPro" id="IPR029055">
    <property type="entry name" value="Ntn_hydrolases_N"/>
</dbReference>
<dbReference type="InterPro" id="IPR001347">
    <property type="entry name" value="SIS_dom"/>
</dbReference>
<dbReference type="InterPro" id="IPR046348">
    <property type="entry name" value="SIS_dom_sf"/>
</dbReference>
<dbReference type="NCBIfam" id="TIGR01135">
    <property type="entry name" value="glmS"/>
    <property type="match status" value="1"/>
</dbReference>
<dbReference type="NCBIfam" id="NF001484">
    <property type="entry name" value="PRK00331.1"/>
    <property type="match status" value="1"/>
</dbReference>
<dbReference type="PANTHER" id="PTHR10937">
    <property type="entry name" value="GLUCOSAMINE--FRUCTOSE-6-PHOSPHATE AMINOTRANSFERASE, ISOMERIZING"/>
    <property type="match status" value="1"/>
</dbReference>
<dbReference type="PANTHER" id="PTHR10937:SF0">
    <property type="entry name" value="GLUTAMINE--FRUCTOSE-6-PHOSPHATE TRANSAMINASE (ISOMERIZING)"/>
    <property type="match status" value="1"/>
</dbReference>
<dbReference type="Pfam" id="PF13522">
    <property type="entry name" value="GATase_6"/>
    <property type="match status" value="1"/>
</dbReference>
<dbReference type="Pfam" id="PF01380">
    <property type="entry name" value="SIS"/>
    <property type="match status" value="2"/>
</dbReference>
<dbReference type="SUPFAM" id="SSF56235">
    <property type="entry name" value="N-terminal nucleophile aminohydrolases (Ntn hydrolases)"/>
    <property type="match status" value="1"/>
</dbReference>
<dbReference type="SUPFAM" id="SSF53697">
    <property type="entry name" value="SIS domain"/>
    <property type="match status" value="1"/>
</dbReference>
<dbReference type="PROSITE" id="PS51278">
    <property type="entry name" value="GATASE_TYPE_2"/>
    <property type="match status" value="1"/>
</dbReference>
<dbReference type="PROSITE" id="PS51464">
    <property type="entry name" value="SIS"/>
    <property type="match status" value="2"/>
</dbReference>
<organism>
    <name type="scientific">Salmonella paratyphi A (strain ATCC 9150 / SARB42)</name>
    <dbReference type="NCBI Taxonomy" id="295319"/>
    <lineage>
        <taxon>Bacteria</taxon>
        <taxon>Pseudomonadati</taxon>
        <taxon>Pseudomonadota</taxon>
        <taxon>Gammaproteobacteria</taxon>
        <taxon>Enterobacterales</taxon>
        <taxon>Enterobacteriaceae</taxon>
        <taxon>Salmonella</taxon>
    </lineage>
</organism>
<protein>
    <recommendedName>
        <fullName evidence="1">Glutamine--fructose-6-phosphate aminotransferase [isomerizing]</fullName>
        <ecNumber evidence="1">2.6.1.16</ecNumber>
    </recommendedName>
    <alternativeName>
        <fullName evidence="1">D-fructose-6-phosphate amidotransferase</fullName>
    </alternativeName>
    <alternativeName>
        <fullName evidence="1">GFAT</fullName>
    </alternativeName>
    <alternativeName>
        <fullName evidence="1">Glucosamine-6-phosphate synthase</fullName>
    </alternativeName>
    <alternativeName>
        <fullName evidence="1">Hexosephosphate aminotransferase</fullName>
    </alternativeName>
    <alternativeName>
        <fullName evidence="1">L-glutamine--D-fructose-6-phosphate amidotransferase</fullName>
    </alternativeName>
</protein>
<feature type="initiator methionine" description="Removed" evidence="1">
    <location>
        <position position="1"/>
    </location>
</feature>
<feature type="chain" id="PRO_0000135373" description="Glutamine--fructose-6-phosphate aminotransferase [isomerizing]">
    <location>
        <begin position="2"/>
        <end position="609"/>
    </location>
</feature>
<feature type="domain" description="Glutamine amidotransferase type-2" evidence="1">
    <location>
        <begin position="2"/>
        <end position="218"/>
    </location>
</feature>
<feature type="domain" description="SIS 1" evidence="1">
    <location>
        <begin position="286"/>
        <end position="426"/>
    </location>
</feature>
<feature type="domain" description="SIS 2" evidence="1">
    <location>
        <begin position="458"/>
        <end position="599"/>
    </location>
</feature>
<feature type="active site" description="Nucleophile; for GATase activity" evidence="1">
    <location>
        <position position="2"/>
    </location>
</feature>
<feature type="active site" description="For Fru-6P isomerization activity" evidence="1">
    <location>
        <position position="604"/>
    </location>
</feature>
<accession>Q5PKV9</accession>
<comment type="function">
    <text evidence="1">Catalyzes the first step in hexosamine metabolism, converting fructose-6P into glucosamine-6P using glutamine as a nitrogen source.</text>
</comment>
<comment type="catalytic activity">
    <reaction evidence="1">
        <text>D-fructose 6-phosphate + L-glutamine = D-glucosamine 6-phosphate + L-glutamate</text>
        <dbReference type="Rhea" id="RHEA:13237"/>
        <dbReference type="ChEBI" id="CHEBI:29985"/>
        <dbReference type="ChEBI" id="CHEBI:58359"/>
        <dbReference type="ChEBI" id="CHEBI:58725"/>
        <dbReference type="ChEBI" id="CHEBI:61527"/>
        <dbReference type="EC" id="2.6.1.16"/>
    </reaction>
</comment>
<comment type="subunit">
    <text evidence="1">Homodimer.</text>
</comment>
<comment type="subcellular location">
    <subcellularLocation>
        <location evidence="1">Cytoplasm</location>
    </subcellularLocation>
</comment>
<evidence type="ECO:0000255" key="1">
    <source>
        <dbReference type="HAMAP-Rule" id="MF_00164"/>
    </source>
</evidence>
<reference key="1">
    <citation type="journal article" date="2004" name="Nat. Genet.">
        <title>Comparison of genome degradation in Paratyphi A and Typhi, human-restricted serovars of Salmonella enterica that cause typhoid.</title>
        <authorList>
            <person name="McClelland M."/>
            <person name="Sanderson K.E."/>
            <person name="Clifton S.W."/>
            <person name="Latreille P."/>
            <person name="Porwollik S."/>
            <person name="Sabo A."/>
            <person name="Meyer R."/>
            <person name="Bieri T."/>
            <person name="Ozersky P."/>
            <person name="McLellan M."/>
            <person name="Harkins C.R."/>
            <person name="Wang C."/>
            <person name="Nguyen C."/>
            <person name="Berghoff A."/>
            <person name="Elliott G."/>
            <person name="Kohlberg S."/>
            <person name="Strong C."/>
            <person name="Du F."/>
            <person name="Carter J."/>
            <person name="Kremizki C."/>
            <person name="Layman D."/>
            <person name="Leonard S."/>
            <person name="Sun H."/>
            <person name="Fulton L."/>
            <person name="Nash W."/>
            <person name="Miner T."/>
            <person name="Minx P."/>
            <person name="Delehaunty K."/>
            <person name="Fronick C."/>
            <person name="Magrini V."/>
            <person name="Nhan M."/>
            <person name="Warren W."/>
            <person name="Florea L."/>
            <person name="Spieth J."/>
            <person name="Wilson R.K."/>
        </authorList>
    </citation>
    <scope>NUCLEOTIDE SEQUENCE [LARGE SCALE GENOMIC DNA]</scope>
    <source>
        <strain>ATCC 9150 / SARB42</strain>
    </source>
</reference>
<name>GLMS_SALPA</name>
<sequence length="609" mass="66850">MCGIVGAIAQRDVAEILLEGLRRLEYRGYDSAGLAVVDAEGHMTRLRRLGKVQMLAQAAEEHPLHGGTGIAHTRWATHGEPSEANAHPHVSEHIVVVHNGIIENHEPLREALKARGYTFVSETDTEVIAHLVNWELKQGGTLREAVLRAIPQLRGAYGTVIMDTRHPDTLLAARSGSPLVIGLGMGENFIASDQLALLPVTRRFIFLEEGDIAEITRRSVNIFDNTGAEVKRQDIESNLQYDAGDKGIYRHYMQKEIYEQPNAIKNTLTGRISHGQVDLSELGPNADELLSKVEHIQILACGTSYNSGMVSRYWFESLAGIPCDVEIASEFRYRKSAVRRNSLMITLSQSGETADTLAGLRLSKELGYLGSLAICNVPGSSLVRESDLALMTNAGTEIGVASTKAFTTQLTVLLMLVAKLSRLKGLDASIEHDIVHGLQALPSRIEQMLSQDKRIELLAEDFSDKHHALFLGRGDQYPIALEGALKLKEISYIHAEAYAAGELKHGPLALIDADMPVIVVAPNNELLEKLKSNIEEVRARGGQLYVFADQDAGFVSSDNMHIIEMPHVEEVIAPIFYTVPLQLLAYHVALIKGTDVDQPRNLAKSVTVE</sequence>
<gene>
    <name evidence="1" type="primary">glmS</name>
    <name type="ordered locus">SPA3700</name>
</gene>
<proteinExistence type="inferred from homology"/>
<keyword id="KW-0032">Aminotransferase</keyword>
<keyword id="KW-0963">Cytoplasm</keyword>
<keyword id="KW-0315">Glutamine amidotransferase</keyword>
<keyword id="KW-0677">Repeat</keyword>
<keyword id="KW-0808">Transferase</keyword>